<evidence type="ECO:0000255" key="1">
    <source>
        <dbReference type="HAMAP-Rule" id="MF_00134"/>
    </source>
</evidence>
<proteinExistence type="inferred from homology"/>
<name>TRPC_PROM4</name>
<reference key="1">
    <citation type="journal article" date="2007" name="PLoS Genet.">
        <title>Patterns and implications of gene gain and loss in the evolution of Prochlorococcus.</title>
        <authorList>
            <person name="Kettler G.C."/>
            <person name="Martiny A.C."/>
            <person name="Huang K."/>
            <person name="Zucker J."/>
            <person name="Coleman M.L."/>
            <person name="Rodrigue S."/>
            <person name="Chen F."/>
            <person name="Lapidus A."/>
            <person name="Ferriera S."/>
            <person name="Johnson J."/>
            <person name="Steglich C."/>
            <person name="Church G.M."/>
            <person name="Richardson P."/>
            <person name="Chisholm S.W."/>
        </authorList>
    </citation>
    <scope>NUCLEOTIDE SEQUENCE [LARGE SCALE GENOMIC DNA]</scope>
    <source>
        <strain>MIT 9211</strain>
    </source>
</reference>
<comment type="catalytic activity">
    <reaction evidence="1">
        <text>1-(2-carboxyphenylamino)-1-deoxy-D-ribulose 5-phosphate + H(+) = (1S,2R)-1-C-(indol-3-yl)glycerol 3-phosphate + CO2 + H2O</text>
        <dbReference type="Rhea" id="RHEA:23476"/>
        <dbReference type="ChEBI" id="CHEBI:15377"/>
        <dbReference type="ChEBI" id="CHEBI:15378"/>
        <dbReference type="ChEBI" id="CHEBI:16526"/>
        <dbReference type="ChEBI" id="CHEBI:58613"/>
        <dbReference type="ChEBI" id="CHEBI:58866"/>
        <dbReference type="EC" id="4.1.1.48"/>
    </reaction>
</comment>
<comment type="pathway">
    <text evidence="1">Amino-acid biosynthesis; L-tryptophan biosynthesis; L-tryptophan from chorismate: step 4/5.</text>
</comment>
<comment type="similarity">
    <text evidence="1">Belongs to the TrpC family.</text>
</comment>
<accession>A9BBR3</accession>
<dbReference type="EC" id="4.1.1.48" evidence="1"/>
<dbReference type="EMBL" id="CP000878">
    <property type="protein sequence ID" value="ABX09275.1"/>
    <property type="molecule type" value="Genomic_DNA"/>
</dbReference>
<dbReference type="RefSeq" id="WP_012195896.1">
    <property type="nucleotide sequence ID" value="NC_009976.1"/>
</dbReference>
<dbReference type="SMR" id="A9BBR3"/>
<dbReference type="STRING" id="93059.P9211_13441"/>
<dbReference type="KEGG" id="pmj:P9211_13441"/>
<dbReference type="eggNOG" id="COG0134">
    <property type="taxonomic scope" value="Bacteria"/>
</dbReference>
<dbReference type="HOGENOM" id="CLU_034247_1_0_3"/>
<dbReference type="OrthoDB" id="9804217at2"/>
<dbReference type="UniPathway" id="UPA00035">
    <property type="reaction ID" value="UER00043"/>
</dbReference>
<dbReference type="Proteomes" id="UP000000788">
    <property type="component" value="Chromosome"/>
</dbReference>
<dbReference type="GO" id="GO:0004425">
    <property type="term" value="F:indole-3-glycerol-phosphate synthase activity"/>
    <property type="evidence" value="ECO:0007669"/>
    <property type="project" value="UniProtKB-UniRule"/>
</dbReference>
<dbReference type="GO" id="GO:0004640">
    <property type="term" value="F:phosphoribosylanthranilate isomerase activity"/>
    <property type="evidence" value="ECO:0007669"/>
    <property type="project" value="TreeGrafter"/>
</dbReference>
<dbReference type="GO" id="GO:0000162">
    <property type="term" value="P:L-tryptophan biosynthetic process"/>
    <property type="evidence" value="ECO:0007669"/>
    <property type="project" value="UniProtKB-UniRule"/>
</dbReference>
<dbReference type="CDD" id="cd00331">
    <property type="entry name" value="IGPS"/>
    <property type="match status" value="1"/>
</dbReference>
<dbReference type="FunFam" id="3.20.20.70:FF:000024">
    <property type="entry name" value="Indole-3-glycerol phosphate synthase"/>
    <property type="match status" value="1"/>
</dbReference>
<dbReference type="Gene3D" id="3.20.20.70">
    <property type="entry name" value="Aldolase class I"/>
    <property type="match status" value="1"/>
</dbReference>
<dbReference type="HAMAP" id="MF_00134_B">
    <property type="entry name" value="IGPS_B"/>
    <property type="match status" value="1"/>
</dbReference>
<dbReference type="InterPro" id="IPR013785">
    <property type="entry name" value="Aldolase_TIM"/>
</dbReference>
<dbReference type="InterPro" id="IPR045186">
    <property type="entry name" value="Indole-3-glycerol_P_synth"/>
</dbReference>
<dbReference type="InterPro" id="IPR013798">
    <property type="entry name" value="Indole-3-glycerol_P_synth_dom"/>
</dbReference>
<dbReference type="InterPro" id="IPR001468">
    <property type="entry name" value="Indole-3-GlycerolPSynthase_CS"/>
</dbReference>
<dbReference type="InterPro" id="IPR011060">
    <property type="entry name" value="RibuloseP-bd_barrel"/>
</dbReference>
<dbReference type="NCBIfam" id="NF001372">
    <property type="entry name" value="PRK00278.1-4"/>
    <property type="match status" value="1"/>
</dbReference>
<dbReference type="NCBIfam" id="NF001377">
    <property type="entry name" value="PRK00278.2-4"/>
    <property type="match status" value="1"/>
</dbReference>
<dbReference type="PANTHER" id="PTHR22854:SF2">
    <property type="entry name" value="INDOLE-3-GLYCEROL-PHOSPHATE SYNTHASE"/>
    <property type="match status" value="1"/>
</dbReference>
<dbReference type="PANTHER" id="PTHR22854">
    <property type="entry name" value="TRYPTOPHAN BIOSYNTHESIS PROTEIN"/>
    <property type="match status" value="1"/>
</dbReference>
<dbReference type="Pfam" id="PF00218">
    <property type="entry name" value="IGPS"/>
    <property type="match status" value="1"/>
</dbReference>
<dbReference type="SUPFAM" id="SSF51366">
    <property type="entry name" value="Ribulose-phoshate binding barrel"/>
    <property type="match status" value="1"/>
</dbReference>
<dbReference type="PROSITE" id="PS00614">
    <property type="entry name" value="IGPS"/>
    <property type="match status" value="1"/>
</dbReference>
<protein>
    <recommendedName>
        <fullName evidence="1">Indole-3-glycerol phosphate synthase</fullName>
        <shortName evidence="1">IGPS</shortName>
        <ecNumber evidence="1">4.1.1.48</ecNumber>
    </recommendedName>
</protein>
<gene>
    <name evidence="1" type="primary">trpC</name>
    <name type="ordered locus">P9211_13441</name>
</gene>
<feature type="chain" id="PRO_1000095880" description="Indole-3-glycerol phosphate synthase">
    <location>
        <begin position="1"/>
        <end position="295"/>
    </location>
</feature>
<organism>
    <name type="scientific">Prochlorococcus marinus (strain MIT 9211)</name>
    <dbReference type="NCBI Taxonomy" id="93059"/>
    <lineage>
        <taxon>Bacteria</taxon>
        <taxon>Bacillati</taxon>
        <taxon>Cyanobacteriota</taxon>
        <taxon>Cyanophyceae</taxon>
        <taxon>Synechococcales</taxon>
        <taxon>Prochlorococcaceae</taxon>
        <taxon>Prochlorococcus</taxon>
    </lineage>
</organism>
<keyword id="KW-0028">Amino-acid biosynthesis</keyword>
<keyword id="KW-0057">Aromatic amino acid biosynthesis</keyword>
<keyword id="KW-0210">Decarboxylase</keyword>
<keyword id="KW-0456">Lyase</keyword>
<keyword id="KW-1185">Reference proteome</keyword>
<keyword id="KW-0822">Tryptophan biosynthesis</keyword>
<sequence>MEIRRRPPNPKVKVANLEYAIPHEDGEPRNILEKILWEKDREVKVSRERVPLSELKAQINNLPQTKDFLGALRQSSTSPAVIAEIKKASPSKGVIRENFDPIEIALAYKLGGATCLSVLTDKSFFQGGFEVLVQVRKTVDLPLLCKEFIIQPYQIYQARVAGADAVLLIAAILSDQDLLYLRKVAISLGLTILVEVHDSNELKRVLDLEGFPLVGINNRDLKTFNTDLRTTKEVVKEHKKRISEQEVLLVSESGLFNSADLEEVSSYGAKAVLVGESLMRQPDIGLALKNLQGFK</sequence>